<dbReference type="EMBL" id="AY075046">
    <property type="protein sequence ID" value="AAL78084.1"/>
    <property type="molecule type" value="Genomic_DNA"/>
</dbReference>
<dbReference type="EMBL" id="CP000951">
    <property type="protein sequence ID" value="ACA98242.1"/>
    <property type="molecule type" value="Genomic_DNA"/>
</dbReference>
<dbReference type="RefSeq" id="WP_012305866.1">
    <property type="nucleotide sequence ID" value="NZ_JAHHPU010000004.1"/>
</dbReference>
<dbReference type="SMR" id="Q8RSW3"/>
<dbReference type="STRING" id="32049.SYNPCC7002_A0230"/>
<dbReference type="KEGG" id="syp:SYNPCC7002_A0230"/>
<dbReference type="eggNOG" id="ENOG5032RR6">
    <property type="taxonomic scope" value="Bacteria"/>
</dbReference>
<dbReference type="HOGENOM" id="CLU_194095_0_0_3"/>
<dbReference type="Proteomes" id="UP000001688">
    <property type="component" value="Chromosome"/>
</dbReference>
<dbReference type="GO" id="GO:0009539">
    <property type="term" value="C:photosystem II reaction center"/>
    <property type="evidence" value="ECO:0007669"/>
    <property type="project" value="InterPro"/>
</dbReference>
<dbReference type="GO" id="GO:0031676">
    <property type="term" value="C:plasma membrane-derived thylakoid membrane"/>
    <property type="evidence" value="ECO:0007669"/>
    <property type="project" value="UniProtKB-SubCell"/>
</dbReference>
<dbReference type="GO" id="GO:0009055">
    <property type="term" value="F:electron transfer activity"/>
    <property type="evidence" value="ECO:0007669"/>
    <property type="project" value="UniProtKB-UniRule"/>
</dbReference>
<dbReference type="GO" id="GO:0020037">
    <property type="term" value="F:heme binding"/>
    <property type="evidence" value="ECO:0007669"/>
    <property type="project" value="InterPro"/>
</dbReference>
<dbReference type="GO" id="GO:0005506">
    <property type="term" value="F:iron ion binding"/>
    <property type="evidence" value="ECO:0007669"/>
    <property type="project" value="UniProtKB-UniRule"/>
</dbReference>
<dbReference type="GO" id="GO:0009767">
    <property type="term" value="P:photosynthetic electron transport chain"/>
    <property type="evidence" value="ECO:0007669"/>
    <property type="project" value="InterPro"/>
</dbReference>
<dbReference type="Gene3D" id="1.20.5.860">
    <property type="entry name" value="Photosystem II cytochrome b559, alpha subunit"/>
    <property type="match status" value="1"/>
</dbReference>
<dbReference type="HAMAP" id="MF_00642">
    <property type="entry name" value="PSII_PsbE"/>
    <property type="match status" value="1"/>
</dbReference>
<dbReference type="InterPro" id="IPR006217">
    <property type="entry name" value="PSII_cyt_b559_asu"/>
</dbReference>
<dbReference type="InterPro" id="IPR037025">
    <property type="entry name" value="PSII_cyt_b559_asu_sf"/>
</dbReference>
<dbReference type="InterPro" id="IPR006216">
    <property type="entry name" value="PSII_cyt_b559_CS"/>
</dbReference>
<dbReference type="InterPro" id="IPR013081">
    <property type="entry name" value="PSII_cyt_b559_N"/>
</dbReference>
<dbReference type="InterPro" id="IPR013082">
    <property type="entry name" value="PSII_cytb559_asu_lum"/>
</dbReference>
<dbReference type="NCBIfam" id="TIGR01332">
    <property type="entry name" value="cyt_b559_alpha"/>
    <property type="match status" value="1"/>
</dbReference>
<dbReference type="PANTHER" id="PTHR33391">
    <property type="entry name" value="CYTOCHROME B559 SUBUNIT BETA-RELATED"/>
    <property type="match status" value="1"/>
</dbReference>
<dbReference type="PANTHER" id="PTHR33391:SF9">
    <property type="entry name" value="CYTOCHROME B559 SUBUNIT BETA-RELATED"/>
    <property type="match status" value="1"/>
</dbReference>
<dbReference type="Pfam" id="PF00283">
    <property type="entry name" value="Cytochrom_B559"/>
    <property type="match status" value="1"/>
</dbReference>
<dbReference type="Pfam" id="PF00284">
    <property type="entry name" value="Cytochrom_B559a"/>
    <property type="match status" value="1"/>
</dbReference>
<dbReference type="PIRSF" id="PIRSF000036">
    <property type="entry name" value="PsbE"/>
    <property type="match status" value="1"/>
</dbReference>
<dbReference type="SUPFAM" id="SSF161045">
    <property type="entry name" value="Cytochrome b559 subunits"/>
    <property type="match status" value="1"/>
</dbReference>
<dbReference type="PROSITE" id="PS00537">
    <property type="entry name" value="CYTOCHROME_B559"/>
    <property type="match status" value="1"/>
</dbReference>
<proteinExistence type="inferred from homology"/>
<evidence type="ECO:0000255" key="1">
    <source>
        <dbReference type="HAMAP-Rule" id="MF_00642"/>
    </source>
</evidence>
<sequence length="81" mass="9322">MAGSTGERPFSDIVTSIRYWVIHSITIPMLFIAGWLFVSTGLAYDTFGTPRPDQYFTETRQEIPIVTDRYKAIDQINEFNN</sequence>
<keyword id="KW-0249">Electron transport</keyword>
<keyword id="KW-0349">Heme</keyword>
<keyword id="KW-0408">Iron</keyword>
<keyword id="KW-0472">Membrane</keyword>
<keyword id="KW-0479">Metal-binding</keyword>
<keyword id="KW-0602">Photosynthesis</keyword>
<keyword id="KW-0604">Photosystem II</keyword>
<keyword id="KW-1185">Reference proteome</keyword>
<keyword id="KW-0793">Thylakoid</keyword>
<keyword id="KW-0812">Transmembrane</keyword>
<keyword id="KW-1133">Transmembrane helix</keyword>
<keyword id="KW-0813">Transport</keyword>
<name>PSBE_PICP2</name>
<reference key="1">
    <citation type="journal article" date="2002" name="J. Biol. Chem.">
        <title>Assembly of photosystem I. I. Inactivation of the rubA gene encoding a membrane-associated rubredoxin in the cyanobacterium Synechococcus sp. PCC 7002 causes a loss of photosystem I activity.</title>
        <authorList>
            <person name="Shen G."/>
            <person name="Zhao J."/>
            <person name="Reimer S.K."/>
            <person name="Antonkine M.L."/>
            <person name="Cai Q."/>
            <person name="Weiland S.M."/>
            <person name="Golbeck J.H."/>
            <person name="Bryant D.A."/>
        </authorList>
    </citation>
    <scope>NUCLEOTIDE SEQUENCE [GENOMIC DNA]</scope>
</reference>
<reference key="2">
    <citation type="submission" date="2008-02" db="EMBL/GenBank/DDBJ databases">
        <title>Complete sequence of Synechococcus sp. PCC 7002.</title>
        <authorList>
            <person name="Li T."/>
            <person name="Zhao J."/>
            <person name="Zhao C."/>
            <person name="Liu Z."/>
            <person name="Zhao F."/>
            <person name="Marquardt J."/>
            <person name="Nomura C.T."/>
            <person name="Persson S."/>
            <person name="Detter J.C."/>
            <person name="Richardson P.M."/>
            <person name="Lanz C."/>
            <person name="Schuster S.C."/>
            <person name="Wang J."/>
            <person name="Li S."/>
            <person name="Huang X."/>
            <person name="Cai T."/>
            <person name="Yu Z."/>
            <person name="Luo J."/>
            <person name="Zhao J."/>
            <person name="Bryant D.A."/>
        </authorList>
    </citation>
    <scope>NUCLEOTIDE SEQUENCE [LARGE SCALE GENOMIC DNA]</scope>
    <source>
        <strain>ATCC 27264 / PCC 7002 / PR-6</strain>
    </source>
</reference>
<accession>Q8RSW3</accession>
<accession>B1XMQ5</accession>
<protein>
    <recommendedName>
        <fullName evidence="1">Cytochrome b559 subunit alpha</fullName>
    </recommendedName>
    <alternativeName>
        <fullName evidence="1">PSII reaction center subunit V</fullName>
    </alternativeName>
</protein>
<gene>
    <name evidence="1" type="primary">psbE</name>
    <name type="ordered locus">SYNPCC7002_A0230</name>
</gene>
<feature type="chain" id="PRO_0000200344" description="Cytochrome b559 subunit alpha">
    <location>
        <begin position="1"/>
        <end position="81"/>
    </location>
</feature>
<feature type="transmembrane region" description="Helical" evidence="1">
    <location>
        <begin position="21"/>
        <end position="35"/>
    </location>
</feature>
<feature type="binding site" description="axial binding residue" evidence="1">
    <location>
        <position position="23"/>
    </location>
    <ligand>
        <name>heme</name>
        <dbReference type="ChEBI" id="CHEBI:30413"/>
        <note>ligand shared with beta subunit</note>
    </ligand>
    <ligandPart>
        <name>Fe</name>
        <dbReference type="ChEBI" id="CHEBI:18248"/>
    </ligandPart>
</feature>
<organism>
    <name type="scientific">Picosynechococcus sp. (strain ATCC 27264 / PCC 7002 / PR-6)</name>
    <name type="common">Agmenellum quadruplicatum</name>
    <dbReference type="NCBI Taxonomy" id="32049"/>
    <lineage>
        <taxon>Bacteria</taxon>
        <taxon>Bacillati</taxon>
        <taxon>Cyanobacteriota</taxon>
        <taxon>Cyanophyceae</taxon>
        <taxon>Oscillatoriophycideae</taxon>
        <taxon>Chroococcales</taxon>
        <taxon>Geminocystaceae</taxon>
        <taxon>Picosynechococcus</taxon>
    </lineage>
</organism>
<comment type="function">
    <text evidence="1">This b-type cytochrome is tightly associated with the reaction center of photosystem II (PSII). PSII is a light-driven water:plastoquinone oxidoreductase that uses light energy to abstract electrons from H(2)O, generating O(2) and a proton gradient subsequently used for ATP formation. It consists of a core antenna complex that captures photons, and an electron transfer chain that converts photonic excitation into a charge separation.</text>
</comment>
<comment type="cofactor">
    <cofactor evidence="1">
        <name>heme b</name>
        <dbReference type="ChEBI" id="CHEBI:60344"/>
    </cofactor>
    <text evidence="1">With its partner (PsbF) binds heme. PSII binds additional chlorophylls, carotenoids and specific lipids.</text>
</comment>
<comment type="subunit">
    <text evidence="1">Heterodimer of an alpha subunit and a beta subunit. PSII is composed of 1 copy each of membrane proteins PsbA, PsbB, PsbC, PsbD, PsbE, PsbF, PsbH, PsbI, PsbJ, PsbK, PsbL, PsbM, PsbT, PsbX, PsbY, PsbZ, Psb30/Ycf12, peripheral proteins PsbO, CyanoQ (PsbQ), PsbU, PsbV and a large number of cofactors. It forms dimeric complexes.</text>
</comment>
<comment type="subcellular location">
    <subcellularLocation>
        <location evidence="1">Cellular thylakoid membrane</location>
        <topology evidence="1">Single-pass membrane protein</topology>
    </subcellularLocation>
</comment>
<comment type="similarity">
    <text evidence="1">Belongs to the PsbE/PsbF family.</text>
</comment>